<comment type="function">
    <text evidence="3 7">Extracellular signaling peptide that may regulate primary root growth rate and systemic nitrogen (N)-demand signaling (By similarity). Mediates up-regulation of genes involved in N uptake and assimilation pathways (PubMed:25324386).</text>
</comment>
<comment type="subunit">
    <text evidence="3">Interacts with CEP receptors (e.g. CEPR1 and CEPR2).</text>
</comment>
<comment type="subcellular location">
    <molecule>C-terminally encoded peptide 7</molecule>
    <subcellularLocation>
        <location evidence="1">Secreted</location>
        <location evidence="1">Extracellular space</location>
        <location evidence="1">Apoplast</location>
    </subcellularLocation>
    <text evidence="1">Accumulates in xylem sap.</text>
</comment>
<comment type="induction">
    <text evidence="7">Triggered by nitrogen depletion.</text>
</comment>
<comment type="PTM">
    <text evidence="3">The mature small signaling peptide is generated by proteolytic processing of the longer precursor.</text>
</comment>
<comment type="similarity">
    <text evidence="9">Belongs to the C-terminally encoded plant signaling peptide (CEP) family.</text>
</comment>
<protein>
    <recommendedName>
        <fullName evidence="8">Precursor of CEP7</fullName>
        <shortName evidence="8">PCEP7</shortName>
    </recommendedName>
    <component>
        <recommendedName>
            <fullName evidence="8">C-terminally encoded peptide 7</fullName>
            <shortName evidence="8">CEP7</shortName>
        </recommendedName>
    </component>
</protein>
<sequence length="76" mass="8125">MAKCTLTSLILLLIVLVLIQESHIVEGRPLKSSRISNVSKKFAAGNSNLSSKLTTEDHSLDAFRPTNPGNSPGIGH</sequence>
<keyword id="KW-0052">Apoplast</keyword>
<keyword id="KW-0217">Developmental protein</keyword>
<keyword id="KW-0325">Glycoprotein</keyword>
<keyword id="KW-0372">Hormone</keyword>
<keyword id="KW-0379">Hydroxylation</keyword>
<keyword id="KW-1185">Reference proteome</keyword>
<keyword id="KW-0964">Secreted</keyword>
<keyword id="KW-0732">Signal</keyword>
<proteinExistence type="evidence at transcript level"/>
<organism>
    <name type="scientific">Arabidopsis thaliana</name>
    <name type="common">Mouse-ear cress</name>
    <dbReference type="NCBI Taxonomy" id="3702"/>
    <lineage>
        <taxon>Eukaryota</taxon>
        <taxon>Viridiplantae</taxon>
        <taxon>Streptophyta</taxon>
        <taxon>Embryophyta</taxon>
        <taxon>Tracheophyta</taxon>
        <taxon>Spermatophyta</taxon>
        <taxon>Magnoliopsida</taxon>
        <taxon>eudicotyledons</taxon>
        <taxon>Gunneridae</taxon>
        <taxon>Pentapetalae</taxon>
        <taxon>rosids</taxon>
        <taxon>malvids</taxon>
        <taxon>Brassicales</taxon>
        <taxon>Brassicaceae</taxon>
        <taxon>Camelineae</taxon>
        <taxon>Arabidopsis</taxon>
    </lineage>
</organism>
<name>PCEP7_ARATH</name>
<dbReference type="EMBL" id="AB010700">
    <property type="status" value="NOT_ANNOTATED_CDS"/>
    <property type="molecule type" value="Genomic_DNA"/>
</dbReference>
<dbReference type="EMBL" id="CP002688">
    <property type="status" value="NOT_ANNOTATED_CDS"/>
    <property type="molecule type" value="Genomic_DNA"/>
</dbReference>
<dbReference type="SMR" id="P0DN96"/>
<dbReference type="STRING" id="3702.P0DN96"/>
<dbReference type="GlyCosmos" id="P0DN96">
    <property type="glycosylation" value="2 sites, No reported glycans"/>
</dbReference>
<dbReference type="GlyGen" id="P0DN96">
    <property type="glycosylation" value="2 sites"/>
</dbReference>
<dbReference type="Araport" id="AT5G66818"/>
<dbReference type="TAIR" id="AT5G66818"/>
<dbReference type="InParanoid" id="P0DN96"/>
<dbReference type="PRO" id="PR:P0DN96"/>
<dbReference type="Proteomes" id="UP000006548">
    <property type="component" value="Chromosome 5"/>
</dbReference>
<dbReference type="GO" id="GO:0048046">
    <property type="term" value="C:apoplast"/>
    <property type="evidence" value="ECO:0000250"/>
    <property type="project" value="UniProtKB"/>
</dbReference>
<dbReference type="GO" id="GO:0005576">
    <property type="term" value="C:extracellular region"/>
    <property type="evidence" value="ECO:0000318"/>
    <property type="project" value="GO_Central"/>
</dbReference>
<dbReference type="GO" id="GO:0005179">
    <property type="term" value="F:hormone activity"/>
    <property type="evidence" value="ECO:0000250"/>
    <property type="project" value="UniProtKB"/>
</dbReference>
<dbReference type="GO" id="GO:0006995">
    <property type="term" value="P:cellular response to nitrogen starvation"/>
    <property type="evidence" value="ECO:0000270"/>
    <property type="project" value="UniProtKB"/>
</dbReference>
<dbReference type="GO" id="GO:1902025">
    <property type="term" value="P:nitrate import"/>
    <property type="evidence" value="ECO:0000314"/>
    <property type="project" value="UniProtKB"/>
</dbReference>
<dbReference type="GO" id="GO:1901371">
    <property type="term" value="P:regulation of leaf morphogenesis"/>
    <property type="evidence" value="ECO:0000318"/>
    <property type="project" value="GO_Central"/>
</dbReference>
<dbReference type="GO" id="GO:2000280">
    <property type="term" value="P:regulation of root development"/>
    <property type="evidence" value="ECO:0000250"/>
    <property type="project" value="UniProtKB"/>
</dbReference>
<dbReference type="GO" id="GO:0048364">
    <property type="term" value="P:root development"/>
    <property type="evidence" value="ECO:0007669"/>
    <property type="project" value="InterPro"/>
</dbReference>
<dbReference type="InterPro" id="IPR033250">
    <property type="entry name" value="CEP"/>
</dbReference>
<dbReference type="PANTHER" id="PTHR33348:SF7">
    <property type="entry name" value="PRECURSOR OF CEP11-RELATED"/>
    <property type="match status" value="1"/>
</dbReference>
<dbReference type="PANTHER" id="PTHR33348">
    <property type="entry name" value="PRECURSOR OF CEP5"/>
    <property type="match status" value="1"/>
</dbReference>
<reference key="1">
    <citation type="journal article" date="1998" name="DNA Res.">
        <title>Structural analysis of Arabidopsis thaliana chromosome 5. V. Sequence features of the regions of 1,381,565 bp covered by twenty one physically assigned P1 and TAC clones.</title>
        <authorList>
            <person name="Kaneko T."/>
            <person name="Kotani H."/>
            <person name="Nakamura Y."/>
            <person name="Sato S."/>
            <person name="Asamizu E."/>
            <person name="Miyajima N."/>
            <person name="Tabata S."/>
        </authorList>
    </citation>
    <scope>NUCLEOTIDE SEQUENCE [LARGE SCALE GENOMIC DNA]</scope>
    <source>
        <strain>cv. Columbia</strain>
    </source>
</reference>
<reference key="2">
    <citation type="journal article" date="2017" name="Plant J.">
        <title>Araport11: a complete reannotation of the Arabidopsis thaliana reference genome.</title>
        <authorList>
            <person name="Cheng C.Y."/>
            <person name="Krishnakumar V."/>
            <person name="Chan A.P."/>
            <person name="Thibaud-Nissen F."/>
            <person name="Schobel S."/>
            <person name="Town C.D."/>
        </authorList>
    </citation>
    <scope>GENOME REANNOTATION</scope>
    <source>
        <strain>cv. Columbia</strain>
    </source>
</reference>
<reference key="3">
    <citation type="journal article" date="2013" name="J. Exp. Bot.">
        <title>The CEP family in land plants: evolutionary analyses, expression studies, and role in Arabidopsis shoot development.</title>
        <authorList>
            <person name="Roberts I."/>
            <person name="Smith S."/>
            <person name="De Rybel B."/>
            <person name="Van Den Broeke J."/>
            <person name="Smet W."/>
            <person name="De Cokere S."/>
            <person name="Mispelaere M."/>
            <person name="De Smet I."/>
            <person name="Beeckman T."/>
        </authorList>
    </citation>
    <scope>GENE FAMILY</scope>
    <source>
        <strain>cv. Columbia</strain>
    </source>
</reference>
<reference key="4">
    <citation type="journal article" date="2013" name="J. Exp. Bot.">
        <title>CEP genes regulate root and shoot development in response to environmental cues and are specific to seed plants.</title>
        <authorList>
            <person name="Delay C."/>
            <person name="Imin N."/>
            <person name="Djordjevic M.A."/>
        </authorList>
    </citation>
    <scope>GENE FAMILY</scope>
    <scope>NOMENCLATURE</scope>
    <source>
        <strain>cv. Columbia</strain>
    </source>
</reference>
<reference key="5">
    <citation type="journal article" date="2014" name="Science">
        <title>Perception of root-derived peptides by shoot LRR-RKs mediates systemic N-demand signaling.</title>
        <authorList>
            <person name="Tabata R."/>
            <person name="Sumida K."/>
            <person name="Yoshii T."/>
            <person name="Ohyama K."/>
            <person name="Shinohara H."/>
            <person name="Matsubayashi Y."/>
        </authorList>
    </citation>
    <scope>FUNCTION</scope>
    <scope>INDUCTION BY NITROGEN DEPLETION</scope>
    <source>
        <strain>cv. No-0</strain>
    </source>
</reference>
<feature type="signal peptide" evidence="4">
    <location>
        <begin position="1"/>
        <end position="27"/>
    </location>
</feature>
<feature type="propeptide" id="PRO_0000439982" evidence="9">
    <location>
        <begin position="28"/>
        <end position="61"/>
    </location>
</feature>
<feature type="peptide" id="PRO_0000439983" description="C-terminally encoded peptide 7" evidence="2">
    <location>
        <begin position="62"/>
        <end position="76"/>
    </location>
</feature>
<feature type="region of interest" description="Disordered" evidence="6">
    <location>
        <begin position="49"/>
        <end position="76"/>
    </location>
</feature>
<feature type="modified residue" description="Hydroxyproline" evidence="3">
    <location>
        <position position="65"/>
    </location>
</feature>
<feature type="modified residue" description="Hydroxyproline" evidence="2">
    <location>
        <position position="68"/>
    </location>
</feature>
<feature type="modified residue" description="Hydroxyproline" evidence="3">
    <location>
        <position position="72"/>
    </location>
</feature>
<feature type="glycosylation site" description="N-linked (GlcNAc...) asparagine" evidence="5">
    <location>
        <position position="37"/>
    </location>
</feature>
<feature type="glycosylation site" description="N-linked (GlcNAc...) asparagine" evidence="5">
    <location>
        <position position="48"/>
    </location>
</feature>
<evidence type="ECO:0000250" key="1">
    <source>
        <dbReference type="UniProtKB" id="O80460"/>
    </source>
</evidence>
<evidence type="ECO:0000250" key="2">
    <source>
        <dbReference type="UniProtKB" id="Q058G9"/>
    </source>
</evidence>
<evidence type="ECO:0000250" key="3">
    <source>
        <dbReference type="UniProtKB" id="Q8L8Y3"/>
    </source>
</evidence>
<evidence type="ECO:0000255" key="4"/>
<evidence type="ECO:0000255" key="5">
    <source>
        <dbReference type="PROSITE-ProRule" id="PRU00498"/>
    </source>
</evidence>
<evidence type="ECO:0000256" key="6">
    <source>
        <dbReference type="SAM" id="MobiDB-lite"/>
    </source>
</evidence>
<evidence type="ECO:0000269" key="7">
    <source>
    </source>
</evidence>
<evidence type="ECO:0000303" key="8">
    <source>
    </source>
</evidence>
<evidence type="ECO:0000305" key="9"/>
<gene>
    <name evidence="8" type="primary">CEP7</name>
    <name evidence="9" type="ordered locus">At5g66818</name>
    <name evidence="9" type="ORF">MUD21</name>
</gene>
<accession>P0DN96</accession>